<keyword id="KW-0687">Ribonucleoprotein</keyword>
<keyword id="KW-0689">Ribosomal protein</keyword>
<keyword id="KW-0694">RNA-binding</keyword>
<keyword id="KW-0699">rRNA-binding</keyword>
<organism>
    <name type="scientific">Thermoanaerobacter sp. (strain X514)</name>
    <dbReference type="NCBI Taxonomy" id="399726"/>
    <lineage>
        <taxon>Bacteria</taxon>
        <taxon>Bacillati</taxon>
        <taxon>Bacillota</taxon>
        <taxon>Clostridia</taxon>
        <taxon>Thermoanaerobacterales</taxon>
        <taxon>Thermoanaerobacteraceae</taxon>
        <taxon>Thermoanaerobacter</taxon>
    </lineage>
</organism>
<proteinExistence type="inferred from homology"/>
<reference key="1">
    <citation type="submission" date="2008-01" db="EMBL/GenBank/DDBJ databases">
        <title>Complete sequence of Thermoanaerobacter sp. X514.</title>
        <authorList>
            <consortium name="US DOE Joint Genome Institute"/>
            <person name="Copeland A."/>
            <person name="Lucas S."/>
            <person name="Lapidus A."/>
            <person name="Barry K."/>
            <person name="Glavina del Rio T."/>
            <person name="Dalin E."/>
            <person name="Tice H."/>
            <person name="Pitluck S."/>
            <person name="Bruce D."/>
            <person name="Goodwin L."/>
            <person name="Saunders E."/>
            <person name="Brettin T."/>
            <person name="Detter J.C."/>
            <person name="Han C."/>
            <person name="Schmutz J."/>
            <person name="Larimer F."/>
            <person name="Land M."/>
            <person name="Hauser L."/>
            <person name="Kyrpides N."/>
            <person name="Kim E."/>
            <person name="Hemme C."/>
            <person name="Fields M.W."/>
            <person name="He Z."/>
            <person name="Zhou J."/>
            <person name="Richardson P."/>
        </authorList>
    </citation>
    <scope>NUCLEOTIDE SEQUENCE [LARGE SCALE GENOMIC DNA]</scope>
    <source>
        <strain>X514</strain>
    </source>
</reference>
<dbReference type="EMBL" id="CP000923">
    <property type="protein sequence ID" value="ABY92169.1"/>
    <property type="molecule type" value="Genomic_DNA"/>
</dbReference>
<dbReference type="RefSeq" id="WP_009052834.1">
    <property type="nucleotide sequence ID" value="NC_010320.1"/>
</dbReference>
<dbReference type="SMR" id="B0K5P3"/>
<dbReference type="KEGG" id="tex:Teth514_0867"/>
<dbReference type="HOGENOM" id="CLU_044142_4_1_9"/>
<dbReference type="Proteomes" id="UP000002155">
    <property type="component" value="Chromosome"/>
</dbReference>
<dbReference type="GO" id="GO:0022625">
    <property type="term" value="C:cytosolic large ribosomal subunit"/>
    <property type="evidence" value="ECO:0007669"/>
    <property type="project" value="TreeGrafter"/>
</dbReference>
<dbReference type="GO" id="GO:0019843">
    <property type="term" value="F:rRNA binding"/>
    <property type="evidence" value="ECO:0007669"/>
    <property type="project" value="UniProtKB-UniRule"/>
</dbReference>
<dbReference type="GO" id="GO:0003735">
    <property type="term" value="F:structural constituent of ribosome"/>
    <property type="evidence" value="ECO:0007669"/>
    <property type="project" value="InterPro"/>
</dbReference>
<dbReference type="GO" id="GO:0006412">
    <property type="term" value="P:translation"/>
    <property type="evidence" value="ECO:0007669"/>
    <property type="project" value="UniProtKB-UniRule"/>
</dbReference>
<dbReference type="FunFam" id="2.40.30.10:FF:000004">
    <property type="entry name" value="50S ribosomal protein L3"/>
    <property type="match status" value="1"/>
</dbReference>
<dbReference type="FunFam" id="3.30.160.810:FF:000001">
    <property type="entry name" value="50S ribosomal protein L3"/>
    <property type="match status" value="1"/>
</dbReference>
<dbReference type="Gene3D" id="3.30.160.810">
    <property type="match status" value="1"/>
</dbReference>
<dbReference type="Gene3D" id="2.40.30.10">
    <property type="entry name" value="Translation factors"/>
    <property type="match status" value="1"/>
</dbReference>
<dbReference type="HAMAP" id="MF_01325_B">
    <property type="entry name" value="Ribosomal_uL3_B"/>
    <property type="match status" value="1"/>
</dbReference>
<dbReference type="InterPro" id="IPR000597">
    <property type="entry name" value="Ribosomal_uL3"/>
</dbReference>
<dbReference type="InterPro" id="IPR019927">
    <property type="entry name" value="Ribosomal_uL3_bac/org-type"/>
</dbReference>
<dbReference type="InterPro" id="IPR019926">
    <property type="entry name" value="Ribosomal_uL3_CS"/>
</dbReference>
<dbReference type="InterPro" id="IPR009000">
    <property type="entry name" value="Transl_B-barrel_sf"/>
</dbReference>
<dbReference type="NCBIfam" id="TIGR03625">
    <property type="entry name" value="L3_bact"/>
    <property type="match status" value="1"/>
</dbReference>
<dbReference type="PANTHER" id="PTHR11229">
    <property type="entry name" value="50S RIBOSOMAL PROTEIN L3"/>
    <property type="match status" value="1"/>
</dbReference>
<dbReference type="PANTHER" id="PTHR11229:SF16">
    <property type="entry name" value="LARGE RIBOSOMAL SUBUNIT PROTEIN UL3C"/>
    <property type="match status" value="1"/>
</dbReference>
<dbReference type="Pfam" id="PF00297">
    <property type="entry name" value="Ribosomal_L3"/>
    <property type="match status" value="1"/>
</dbReference>
<dbReference type="SUPFAM" id="SSF50447">
    <property type="entry name" value="Translation proteins"/>
    <property type="match status" value="1"/>
</dbReference>
<dbReference type="PROSITE" id="PS00474">
    <property type="entry name" value="RIBOSOMAL_L3"/>
    <property type="match status" value="1"/>
</dbReference>
<evidence type="ECO:0000255" key="1">
    <source>
        <dbReference type="HAMAP-Rule" id="MF_01325"/>
    </source>
</evidence>
<evidence type="ECO:0000256" key="2">
    <source>
        <dbReference type="SAM" id="MobiDB-lite"/>
    </source>
</evidence>
<evidence type="ECO:0000305" key="3"/>
<comment type="function">
    <text evidence="1">One of the primary rRNA binding proteins, it binds directly near the 3'-end of the 23S rRNA, where it nucleates assembly of the 50S subunit.</text>
</comment>
<comment type="subunit">
    <text evidence="1">Part of the 50S ribosomal subunit. Forms a cluster with proteins L14 and L19.</text>
</comment>
<comment type="similarity">
    <text evidence="1">Belongs to the universal ribosomal protein uL3 family.</text>
</comment>
<feature type="chain" id="PRO_1000141936" description="Large ribosomal subunit protein uL3">
    <location>
        <begin position="1"/>
        <end position="210"/>
    </location>
</feature>
<feature type="region of interest" description="Disordered" evidence="2">
    <location>
        <begin position="131"/>
        <end position="155"/>
    </location>
</feature>
<name>RL3_THEPX</name>
<sequence length="210" mass="22968">MKKGILGRKHGMTQIFDEKGEVIPVTVIEAGPCVVVQKKTVETDGYNAIQVGFGDVKEKRLTKPLIGHFKKAGVPFKRYLREFRLDDISGYEVGSEIKVDIFKPGDRVNVTGISKGKGFAGVVKRYGANRGPMSHGSKYHRRVGSMSATTDPGRTFKGKIMPGHMGHERVTIQNLEVVKVDPELNLLLVKGSVPGPKGSLLIIKDSVKSK</sequence>
<accession>B0K5P3</accession>
<gene>
    <name evidence="1" type="primary">rplC</name>
    <name type="ordered locus">Teth514_0867</name>
</gene>
<protein>
    <recommendedName>
        <fullName evidence="1">Large ribosomal subunit protein uL3</fullName>
    </recommendedName>
    <alternativeName>
        <fullName evidence="3">50S ribosomal protein L3</fullName>
    </alternativeName>
</protein>